<keyword id="KW-0067">ATP-binding</keyword>
<keyword id="KW-0418">Kinase</keyword>
<keyword id="KW-0464">Manganese</keyword>
<keyword id="KW-0547">Nucleotide-binding</keyword>
<keyword id="KW-0597">Phosphoprotein</keyword>
<keyword id="KW-1185">Reference proteome</keyword>
<keyword id="KW-0723">Serine/threonine-protein kinase</keyword>
<keyword id="KW-0808">Transferase</keyword>
<sequence>MGLFGTKKIGKYEIGRTIGEGNFAKVKLGYDTTNGTYVAVKIIDKALVIQKGLESQVKREIRTMKLLNHPNIVQIHEVIGTKTKICIVMEYVSGGQLSDRLGRQKMKESDARKLFQQLIDAVDYCHNRGVYHRDLKPQNLLLDSKGNLKVSDFGLSAVPKSGDMLSTACGSPCYIAPELIMNKGYSGAAVDVWSCGVILFELLAGYPPFDDHTLPVLYKKILRADYTFPPGFTGEQKRLIFNILDPNPLSRITLAEIIIKDSWFKIGYTPVYHQLSDSIKDNVAEINAATASSNFINAFQIIAMSSDLDLSGLFEENDDKRYKTRIGSKNTAQETIKKIEAAATYVSLSVERIKHFKVKIQPKEIRSRSSYDLLSAEVIEVTPTNCVIEISKSAGELRLYMEFCQSLSSLLTAEVS</sequence>
<feature type="chain" id="PRO_0000337222" description="CBL-interacting serine/threonine-protein kinase 21">
    <location>
        <begin position="1"/>
        <end position="416"/>
    </location>
</feature>
<feature type="domain" description="Protein kinase" evidence="4">
    <location>
        <begin position="12"/>
        <end position="264"/>
    </location>
</feature>
<feature type="domain" description="NAF" evidence="5">
    <location>
        <begin position="291"/>
        <end position="315"/>
    </location>
</feature>
<feature type="region of interest" description="Activation loop" evidence="1">
    <location>
        <begin position="152"/>
        <end position="178"/>
    </location>
</feature>
<feature type="region of interest" description="PPI" evidence="1">
    <location>
        <begin position="321"/>
        <end position="351"/>
    </location>
</feature>
<feature type="active site" description="Proton acceptor" evidence="4 6">
    <location>
        <position position="134"/>
    </location>
</feature>
<feature type="binding site" evidence="4">
    <location>
        <begin position="18"/>
        <end position="26"/>
    </location>
    <ligand>
        <name>ATP</name>
        <dbReference type="ChEBI" id="CHEBI:30616"/>
    </ligand>
</feature>
<feature type="binding site" evidence="4">
    <location>
        <position position="41"/>
    </location>
    <ligand>
        <name>ATP</name>
        <dbReference type="ChEBI" id="CHEBI:30616"/>
    </ligand>
</feature>
<feature type="modified residue" description="Phosphoserine" evidence="3">
    <location>
        <position position="156"/>
    </location>
</feature>
<feature type="modified residue" description="Phosphothreonine" evidence="2">
    <location>
        <position position="167"/>
    </location>
</feature>
<feature type="sequence conflict" description="In Ref. 4; AAM91328/AAM13050." evidence="8" ref="4">
    <original>Y</original>
    <variation>C</variation>
    <location>
        <position position="124"/>
    </location>
</feature>
<gene>
    <name type="primary">CIPK21</name>
    <name type="synonym">PKS23</name>
    <name type="synonym">SnRK3.4</name>
    <name type="ordered locus">At5g57630</name>
    <name type="ORF">MUA2.22</name>
</gene>
<proteinExistence type="evidence at protein level"/>
<accession>Q94CG0</accession>
<accession>Q8RWJ1</accession>
<accession>Q9FKL0</accession>
<organism>
    <name type="scientific">Arabidopsis thaliana</name>
    <name type="common">Mouse-ear cress</name>
    <dbReference type="NCBI Taxonomy" id="3702"/>
    <lineage>
        <taxon>Eukaryota</taxon>
        <taxon>Viridiplantae</taxon>
        <taxon>Streptophyta</taxon>
        <taxon>Embryophyta</taxon>
        <taxon>Tracheophyta</taxon>
        <taxon>Spermatophyta</taxon>
        <taxon>Magnoliopsida</taxon>
        <taxon>eudicotyledons</taxon>
        <taxon>Gunneridae</taxon>
        <taxon>Pentapetalae</taxon>
        <taxon>rosids</taxon>
        <taxon>malvids</taxon>
        <taxon>Brassicales</taxon>
        <taxon>Brassicaceae</taxon>
        <taxon>Camelineae</taxon>
        <taxon>Arabidopsis</taxon>
    </lineage>
</organism>
<comment type="function">
    <text evidence="1">CIPK serine-threonine protein kinases interact with CBL proteins. Binding of a CBL protein to the regulatory NAF domain of CIPK protein lead to the activation of the kinase in a calcium-dependent manner (By similarity).</text>
</comment>
<comment type="catalytic activity">
    <reaction>
        <text>L-seryl-[protein] + ATP = O-phospho-L-seryl-[protein] + ADP + H(+)</text>
        <dbReference type="Rhea" id="RHEA:17989"/>
        <dbReference type="Rhea" id="RHEA-COMP:9863"/>
        <dbReference type="Rhea" id="RHEA-COMP:11604"/>
        <dbReference type="ChEBI" id="CHEBI:15378"/>
        <dbReference type="ChEBI" id="CHEBI:29999"/>
        <dbReference type="ChEBI" id="CHEBI:30616"/>
        <dbReference type="ChEBI" id="CHEBI:83421"/>
        <dbReference type="ChEBI" id="CHEBI:456216"/>
        <dbReference type="EC" id="2.7.11.1"/>
    </reaction>
</comment>
<comment type="catalytic activity">
    <reaction>
        <text>L-threonyl-[protein] + ATP = O-phospho-L-threonyl-[protein] + ADP + H(+)</text>
        <dbReference type="Rhea" id="RHEA:46608"/>
        <dbReference type="Rhea" id="RHEA-COMP:11060"/>
        <dbReference type="Rhea" id="RHEA-COMP:11605"/>
        <dbReference type="ChEBI" id="CHEBI:15378"/>
        <dbReference type="ChEBI" id="CHEBI:30013"/>
        <dbReference type="ChEBI" id="CHEBI:30616"/>
        <dbReference type="ChEBI" id="CHEBI:61977"/>
        <dbReference type="ChEBI" id="CHEBI:456216"/>
        <dbReference type="EC" id="2.7.11.1"/>
    </reaction>
</comment>
<comment type="cofactor">
    <cofactor evidence="1">
        <name>Mn(2+)</name>
        <dbReference type="ChEBI" id="CHEBI:29035"/>
    </cofactor>
</comment>
<comment type="subunit">
    <text evidence="7">Interacts with CBL9.</text>
</comment>
<comment type="domain">
    <text evidence="1">The activation loop within the kinase domain is the target of phosphorylation/activation by upstream protein kinases. The PPI motif mediates the interaction with the ABI (abscisic acid-insensitive) phosphatases (By similarity).</text>
</comment>
<comment type="similarity">
    <text evidence="8">Belongs to the protein kinase superfamily. CAMK Ser/Thr protein kinase family. SNF1 subfamily.</text>
</comment>
<comment type="sequence caution" evidence="8">
    <conflict type="erroneous gene model prediction">
        <sequence resource="EMBL-CDS" id="BAB08799"/>
    </conflict>
</comment>
<reference key="1">
    <citation type="submission" date="2001-05" db="EMBL/GenBank/DDBJ databases">
        <title>Molecular characterization of the CIPK gene family from Arabidopsis thaliana.</title>
        <authorList>
            <person name="Weinl S."/>
            <person name="Albrecht V."/>
            <person name="Kudla J."/>
        </authorList>
    </citation>
    <scope>NUCLEOTIDE SEQUENCE [MRNA]</scope>
</reference>
<reference key="2">
    <citation type="journal article" date="1998" name="DNA Res.">
        <title>Structural analysis of Arabidopsis thaliana chromosome 5. V. Sequence features of the regions of 1,381,565 bp covered by twenty one physically assigned P1 and TAC clones.</title>
        <authorList>
            <person name="Kaneko T."/>
            <person name="Kotani H."/>
            <person name="Nakamura Y."/>
            <person name="Sato S."/>
            <person name="Asamizu E."/>
            <person name="Miyajima N."/>
            <person name="Tabata S."/>
        </authorList>
    </citation>
    <scope>NUCLEOTIDE SEQUENCE [LARGE SCALE GENOMIC DNA]</scope>
    <source>
        <strain>cv. Columbia</strain>
    </source>
</reference>
<reference key="3">
    <citation type="journal article" date="2017" name="Plant J.">
        <title>Araport11: a complete reannotation of the Arabidopsis thaliana reference genome.</title>
        <authorList>
            <person name="Cheng C.Y."/>
            <person name="Krishnakumar V."/>
            <person name="Chan A.P."/>
            <person name="Thibaud-Nissen F."/>
            <person name="Schobel S."/>
            <person name="Town C.D."/>
        </authorList>
    </citation>
    <scope>GENOME REANNOTATION</scope>
    <source>
        <strain>cv. Columbia</strain>
    </source>
</reference>
<reference key="4">
    <citation type="journal article" date="2003" name="Science">
        <title>Empirical analysis of transcriptional activity in the Arabidopsis genome.</title>
        <authorList>
            <person name="Yamada K."/>
            <person name="Lim J."/>
            <person name="Dale J.M."/>
            <person name="Chen H."/>
            <person name="Shinn P."/>
            <person name="Palm C.J."/>
            <person name="Southwick A.M."/>
            <person name="Wu H.C."/>
            <person name="Kim C.J."/>
            <person name="Nguyen M."/>
            <person name="Pham P.K."/>
            <person name="Cheuk R.F."/>
            <person name="Karlin-Newmann G."/>
            <person name="Liu S.X."/>
            <person name="Lam B."/>
            <person name="Sakano H."/>
            <person name="Wu T."/>
            <person name="Yu G."/>
            <person name="Miranda M."/>
            <person name="Quach H.L."/>
            <person name="Tripp M."/>
            <person name="Chang C.H."/>
            <person name="Lee J.M."/>
            <person name="Toriumi M.J."/>
            <person name="Chan M.M."/>
            <person name="Tang C.C."/>
            <person name="Onodera C.S."/>
            <person name="Deng J.M."/>
            <person name="Akiyama K."/>
            <person name="Ansari Y."/>
            <person name="Arakawa T."/>
            <person name="Banh J."/>
            <person name="Banno F."/>
            <person name="Bowser L."/>
            <person name="Brooks S.Y."/>
            <person name="Carninci P."/>
            <person name="Chao Q."/>
            <person name="Choy N."/>
            <person name="Enju A."/>
            <person name="Goldsmith A.D."/>
            <person name="Gurjal M."/>
            <person name="Hansen N.F."/>
            <person name="Hayashizaki Y."/>
            <person name="Johnson-Hopson C."/>
            <person name="Hsuan V.W."/>
            <person name="Iida K."/>
            <person name="Karnes M."/>
            <person name="Khan S."/>
            <person name="Koesema E."/>
            <person name="Ishida J."/>
            <person name="Jiang P.X."/>
            <person name="Jones T."/>
            <person name="Kawai J."/>
            <person name="Kamiya A."/>
            <person name="Meyers C."/>
            <person name="Nakajima M."/>
            <person name="Narusaka M."/>
            <person name="Seki M."/>
            <person name="Sakurai T."/>
            <person name="Satou M."/>
            <person name="Tamse R."/>
            <person name="Vaysberg M."/>
            <person name="Wallender E.K."/>
            <person name="Wong C."/>
            <person name="Yamamura Y."/>
            <person name="Yuan S."/>
            <person name="Shinozaki K."/>
            <person name="Davis R.W."/>
            <person name="Theologis A."/>
            <person name="Ecker J.R."/>
        </authorList>
    </citation>
    <scope>NUCLEOTIDE SEQUENCE [LARGE SCALE MRNA]</scope>
    <source>
        <strain>cv. Columbia</strain>
    </source>
</reference>
<reference key="5">
    <citation type="journal article" date="2003" name="Plant Physiol.">
        <title>The Arabidopsis CDPK-SnRK superfamily of protein kinases.</title>
        <authorList>
            <person name="Hrabak E.M."/>
            <person name="Chan C.W.M."/>
            <person name="Gribskov M."/>
            <person name="Harper J.F."/>
            <person name="Choi J.H."/>
            <person name="Halford N."/>
            <person name="Kudla J."/>
            <person name="Luan S."/>
            <person name="Nimmo H.G."/>
            <person name="Sussman M.R."/>
            <person name="Thomas M."/>
            <person name="Walker-Simmons K."/>
            <person name="Zhu J.-K."/>
            <person name="Harmon A.C."/>
        </authorList>
    </citation>
    <scope>GENE FAMILY</scope>
    <scope>NOMENCLATURE</scope>
</reference>
<reference key="6">
    <citation type="journal article" date="2004" name="Plant Physiol.">
        <title>Calcium sensors and their interacting protein kinases: genomics of the Arabidopsis and rice CBL-CIPK signaling networks.</title>
        <authorList>
            <person name="Kolukisaoglu U."/>
            <person name="Weinl S."/>
            <person name="Blazevic D."/>
            <person name="Batistic O."/>
            <person name="Kudla J."/>
        </authorList>
    </citation>
    <scope>INTERACTION WITH CBL9</scope>
</reference>
<evidence type="ECO:0000250" key="1"/>
<evidence type="ECO:0000250" key="2">
    <source>
        <dbReference type="UniProtKB" id="Q38997"/>
    </source>
</evidence>
<evidence type="ECO:0000250" key="3">
    <source>
        <dbReference type="UniProtKB" id="Q93V58"/>
    </source>
</evidence>
<evidence type="ECO:0000255" key="4">
    <source>
        <dbReference type="PROSITE-ProRule" id="PRU00159"/>
    </source>
</evidence>
<evidence type="ECO:0000255" key="5">
    <source>
        <dbReference type="PROSITE-ProRule" id="PRU00256"/>
    </source>
</evidence>
<evidence type="ECO:0000255" key="6">
    <source>
        <dbReference type="PROSITE-ProRule" id="PRU10027"/>
    </source>
</evidence>
<evidence type="ECO:0000269" key="7">
    <source>
    </source>
</evidence>
<evidence type="ECO:0000305" key="8"/>
<dbReference type="EC" id="2.7.11.1"/>
<dbReference type="EMBL" id="AY034100">
    <property type="protein sequence ID" value="AAK59696.1"/>
    <property type="molecule type" value="mRNA"/>
</dbReference>
<dbReference type="EMBL" id="AB011482">
    <property type="protein sequence ID" value="BAB08799.1"/>
    <property type="status" value="ALT_SEQ"/>
    <property type="molecule type" value="Genomic_DNA"/>
</dbReference>
<dbReference type="EMBL" id="CP002688">
    <property type="protein sequence ID" value="AED96928.1"/>
    <property type="molecule type" value="Genomic_DNA"/>
</dbReference>
<dbReference type="EMBL" id="AY093051">
    <property type="protein sequence ID" value="AAM13050.1"/>
    <property type="molecule type" value="mRNA"/>
</dbReference>
<dbReference type="EMBL" id="AY128928">
    <property type="protein sequence ID" value="AAM91328.1"/>
    <property type="molecule type" value="mRNA"/>
</dbReference>
<dbReference type="RefSeq" id="NP_568860.1">
    <property type="nucleotide sequence ID" value="NM_125144.4"/>
</dbReference>
<dbReference type="SMR" id="Q94CG0"/>
<dbReference type="BioGRID" id="21112">
    <property type="interactions" value="3"/>
</dbReference>
<dbReference type="FunCoup" id="Q94CG0">
    <property type="interactions" value="382"/>
</dbReference>
<dbReference type="IntAct" id="Q94CG0">
    <property type="interactions" value="3"/>
</dbReference>
<dbReference type="STRING" id="3702.Q94CG0"/>
<dbReference type="PaxDb" id="3702-AT5G57630.1"/>
<dbReference type="EnsemblPlants" id="AT5G57630.1">
    <property type="protein sequence ID" value="AT5G57630.1"/>
    <property type="gene ID" value="AT5G57630"/>
</dbReference>
<dbReference type="GeneID" id="835868"/>
<dbReference type="Gramene" id="AT5G57630.1">
    <property type="protein sequence ID" value="AT5G57630.1"/>
    <property type="gene ID" value="AT5G57630"/>
</dbReference>
<dbReference type="KEGG" id="ath:AT5G57630"/>
<dbReference type="Araport" id="AT5G57630"/>
<dbReference type="TAIR" id="AT5G57630">
    <property type="gene designation" value="CIPK21"/>
</dbReference>
<dbReference type="eggNOG" id="KOG0583">
    <property type="taxonomic scope" value="Eukaryota"/>
</dbReference>
<dbReference type="HOGENOM" id="CLU_000288_59_0_1"/>
<dbReference type="InParanoid" id="Q94CG0"/>
<dbReference type="OrthoDB" id="193931at2759"/>
<dbReference type="PhylomeDB" id="Q94CG0"/>
<dbReference type="PRO" id="PR:Q94CG0"/>
<dbReference type="Proteomes" id="UP000006548">
    <property type="component" value="Chromosome 5"/>
</dbReference>
<dbReference type="ExpressionAtlas" id="Q94CG0">
    <property type="expression patterns" value="baseline and differential"/>
</dbReference>
<dbReference type="GO" id="GO:0005829">
    <property type="term" value="C:cytosol"/>
    <property type="evidence" value="ECO:0000314"/>
    <property type="project" value="TAIR"/>
</dbReference>
<dbReference type="GO" id="GO:0009705">
    <property type="term" value="C:plant-type vacuole membrane"/>
    <property type="evidence" value="ECO:0000314"/>
    <property type="project" value="TAIR"/>
</dbReference>
<dbReference type="GO" id="GO:0005524">
    <property type="term" value="F:ATP binding"/>
    <property type="evidence" value="ECO:0007669"/>
    <property type="project" value="UniProtKB-KW"/>
</dbReference>
<dbReference type="GO" id="GO:0106310">
    <property type="term" value="F:protein serine kinase activity"/>
    <property type="evidence" value="ECO:0007669"/>
    <property type="project" value="RHEA"/>
</dbReference>
<dbReference type="GO" id="GO:0004674">
    <property type="term" value="F:protein serine/threonine kinase activity"/>
    <property type="evidence" value="ECO:0007669"/>
    <property type="project" value="UniProtKB-KW"/>
</dbReference>
<dbReference type="GO" id="GO:0071470">
    <property type="term" value="P:cellular response to osmotic stress"/>
    <property type="evidence" value="ECO:0000315"/>
    <property type="project" value="TAIR"/>
</dbReference>
<dbReference type="GO" id="GO:0071472">
    <property type="term" value="P:cellular response to salt stress"/>
    <property type="evidence" value="ECO:0000315"/>
    <property type="project" value="TAIR"/>
</dbReference>
<dbReference type="GO" id="GO:0007165">
    <property type="term" value="P:signal transduction"/>
    <property type="evidence" value="ECO:0007669"/>
    <property type="project" value="InterPro"/>
</dbReference>
<dbReference type="CDD" id="cd12195">
    <property type="entry name" value="CIPK_C"/>
    <property type="match status" value="1"/>
</dbReference>
<dbReference type="FunFam" id="1.10.510.10:FF:000279">
    <property type="entry name" value="Non-specific serine/threonine protein kinase"/>
    <property type="match status" value="1"/>
</dbReference>
<dbReference type="FunFam" id="3.30.200.20:FF:000096">
    <property type="entry name" value="Non-specific serine/threonine protein kinase"/>
    <property type="match status" value="1"/>
</dbReference>
<dbReference type="FunFam" id="3.30.310.80:FF:000005">
    <property type="entry name" value="Non-specific serine/threonine protein kinase"/>
    <property type="match status" value="1"/>
</dbReference>
<dbReference type="Gene3D" id="3.30.310.80">
    <property type="entry name" value="Kinase associated domain 1, KA1"/>
    <property type="match status" value="1"/>
</dbReference>
<dbReference type="Gene3D" id="3.30.200.20">
    <property type="entry name" value="Phosphorylase Kinase, domain 1"/>
    <property type="match status" value="1"/>
</dbReference>
<dbReference type="Gene3D" id="1.10.510.10">
    <property type="entry name" value="Transferase(Phosphotransferase) domain 1"/>
    <property type="match status" value="1"/>
</dbReference>
<dbReference type="InterPro" id="IPR011009">
    <property type="entry name" value="Kinase-like_dom_sf"/>
</dbReference>
<dbReference type="InterPro" id="IPR018451">
    <property type="entry name" value="NAF/FISL_domain"/>
</dbReference>
<dbReference type="InterPro" id="IPR004041">
    <property type="entry name" value="NAF_dom"/>
</dbReference>
<dbReference type="InterPro" id="IPR000719">
    <property type="entry name" value="Prot_kinase_dom"/>
</dbReference>
<dbReference type="InterPro" id="IPR017441">
    <property type="entry name" value="Protein_kinase_ATP_BS"/>
</dbReference>
<dbReference type="InterPro" id="IPR008271">
    <property type="entry name" value="Ser/Thr_kinase_AS"/>
</dbReference>
<dbReference type="PANTHER" id="PTHR43895">
    <property type="entry name" value="CALCIUM/CALMODULIN-DEPENDENT PROTEIN KINASE KINASE-RELATED"/>
    <property type="match status" value="1"/>
</dbReference>
<dbReference type="PANTHER" id="PTHR43895:SF65">
    <property type="entry name" value="CBL-INTERACTING PROTEIN KINASE 21"/>
    <property type="match status" value="1"/>
</dbReference>
<dbReference type="Pfam" id="PF03822">
    <property type="entry name" value="NAF"/>
    <property type="match status" value="1"/>
</dbReference>
<dbReference type="Pfam" id="PF00069">
    <property type="entry name" value="Pkinase"/>
    <property type="match status" value="1"/>
</dbReference>
<dbReference type="SMART" id="SM00220">
    <property type="entry name" value="S_TKc"/>
    <property type="match status" value="1"/>
</dbReference>
<dbReference type="SUPFAM" id="SSF56112">
    <property type="entry name" value="Protein kinase-like (PK-like)"/>
    <property type="match status" value="1"/>
</dbReference>
<dbReference type="PROSITE" id="PS50816">
    <property type="entry name" value="NAF"/>
    <property type="match status" value="1"/>
</dbReference>
<dbReference type="PROSITE" id="PS00107">
    <property type="entry name" value="PROTEIN_KINASE_ATP"/>
    <property type="match status" value="1"/>
</dbReference>
<dbReference type="PROSITE" id="PS50011">
    <property type="entry name" value="PROTEIN_KINASE_DOM"/>
    <property type="match status" value="1"/>
</dbReference>
<dbReference type="PROSITE" id="PS00108">
    <property type="entry name" value="PROTEIN_KINASE_ST"/>
    <property type="match status" value="1"/>
</dbReference>
<name>CIPKL_ARATH</name>
<protein>
    <recommendedName>
        <fullName>CBL-interacting serine/threonine-protein kinase 21</fullName>
        <ecNumber>2.7.11.1</ecNumber>
    </recommendedName>
    <alternativeName>
        <fullName>SNF1-related kinase 3.4</fullName>
    </alternativeName>
    <alternativeName>
        <fullName>SOS2-like protein kinase PKS23</fullName>
    </alternativeName>
</protein>